<evidence type="ECO:0000255" key="1"/>
<evidence type="ECO:0000305" key="2"/>
<accession>Q57486</accession>
<gene>
    <name type="ordered locus">HI_0608</name>
</gene>
<feature type="chain" id="PRO_0000172505" description="Uncharacterized transporter HI_0608">
    <location>
        <begin position="1"/>
        <end position="461"/>
    </location>
</feature>
<feature type="transmembrane region" description="Helical" evidence="1">
    <location>
        <begin position="13"/>
        <end position="33"/>
    </location>
</feature>
<feature type="transmembrane region" description="Helical" evidence="1">
    <location>
        <begin position="54"/>
        <end position="74"/>
    </location>
</feature>
<feature type="transmembrane region" description="Helical" evidence="1">
    <location>
        <begin position="81"/>
        <end position="101"/>
    </location>
</feature>
<feature type="transmembrane region" description="Helical" evidence="1">
    <location>
        <begin position="120"/>
        <end position="140"/>
    </location>
</feature>
<feature type="transmembrane region" description="Helical" evidence="1">
    <location>
        <begin position="170"/>
        <end position="190"/>
    </location>
</feature>
<feature type="transmembrane region" description="Helical" evidence="1">
    <location>
        <begin position="211"/>
        <end position="231"/>
    </location>
</feature>
<feature type="transmembrane region" description="Helical" evidence="1">
    <location>
        <begin position="256"/>
        <end position="276"/>
    </location>
</feature>
<feature type="transmembrane region" description="Helical" evidence="1">
    <location>
        <begin position="286"/>
        <end position="306"/>
    </location>
</feature>
<feature type="transmembrane region" description="Helical" evidence="1">
    <location>
        <begin position="314"/>
        <end position="334"/>
    </location>
</feature>
<feature type="transmembrane region" description="Helical" evidence="1">
    <location>
        <begin position="349"/>
        <end position="369"/>
    </location>
</feature>
<feature type="transmembrane region" description="Helical" evidence="1">
    <location>
        <begin position="377"/>
        <end position="397"/>
    </location>
</feature>
<feature type="transmembrane region" description="Helical" evidence="1">
    <location>
        <begin position="399"/>
        <end position="419"/>
    </location>
</feature>
<feature type="transmembrane region" description="Helical" evidence="1">
    <location>
        <begin position="439"/>
        <end position="459"/>
    </location>
</feature>
<proteinExistence type="inferred from homology"/>
<name>Y608_HAEIN</name>
<protein>
    <recommendedName>
        <fullName>Uncharacterized transporter HI_0608</fullName>
    </recommendedName>
</protein>
<reference key="1">
    <citation type="journal article" date="1995" name="Science">
        <title>Whole-genome random sequencing and assembly of Haemophilus influenzae Rd.</title>
        <authorList>
            <person name="Fleischmann R.D."/>
            <person name="Adams M.D."/>
            <person name="White O."/>
            <person name="Clayton R.A."/>
            <person name="Kirkness E.F."/>
            <person name="Kerlavage A.R."/>
            <person name="Bult C.J."/>
            <person name="Tomb J.-F."/>
            <person name="Dougherty B.A."/>
            <person name="Merrick J.M."/>
            <person name="McKenney K."/>
            <person name="Sutton G.G."/>
            <person name="FitzHugh W."/>
            <person name="Fields C.A."/>
            <person name="Gocayne J.D."/>
            <person name="Scott J.D."/>
            <person name="Shirley R."/>
            <person name="Liu L.-I."/>
            <person name="Glodek A."/>
            <person name="Kelley J.M."/>
            <person name="Weidman J.F."/>
            <person name="Phillips C.A."/>
            <person name="Spriggs T."/>
            <person name="Hedblom E."/>
            <person name="Cotton M.D."/>
            <person name="Utterback T.R."/>
            <person name="Hanna M.C."/>
            <person name="Nguyen D.T."/>
            <person name="Saudek D.M."/>
            <person name="Brandon R.C."/>
            <person name="Fine L.D."/>
            <person name="Fritchman J.L."/>
            <person name="Fuhrmann J.L."/>
            <person name="Geoghagen N.S.M."/>
            <person name="Gnehm C.L."/>
            <person name="McDonald L.A."/>
            <person name="Small K.V."/>
            <person name="Fraser C.M."/>
            <person name="Smith H.O."/>
            <person name="Venter J.C."/>
        </authorList>
    </citation>
    <scope>NUCLEOTIDE SEQUENCE [LARGE SCALE GENOMIC DNA]</scope>
    <source>
        <strain>ATCC 51907 / DSM 11121 / KW20 / Rd</strain>
    </source>
</reference>
<organism>
    <name type="scientific">Haemophilus influenzae (strain ATCC 51907 / DSM 11121 / KW20 / Rd)</name>
    <dbReference type="NCBI Taxonomy" id="71421"/>
    <lineage>
        <taxon>Bacteria</taxon>
        <taxon>Pseudomonadati</taxon>
        <taxon>Pseudomonadota</taxon>
        <taxon>Gammaproteobacteria</taxon>
        <taxon>Pasteurellales</taxon>
        <taxon>Pasteurellaceae</taxon>
        <taxon>Haemophilus</taxon>
    </lineage>
</organism>
<comment type="subcellular location">
    <subcellularLocation>
        <location evidence="2">Cell membrane</location>
        <topology evidence="2">Multi-pass membrane protein</topology>
    </subcellularLocation>
</comment>
<comment type="similarity">
    <text evidence="2">Belongs to the SLC13A/DASS transporter (TC 2.A.47) family. NADC subfamily.</text>
</comment>
<sequence>MGEMASLRSHKNGIIFILDIVLFFVLLNVLPFEPKANSGLALLAFIAVLWLSEALHVTITALLVPLLAVALGLVSTKQALVGFADPTIFLFFGGFSLATALHIQKLDKLIANKIMALARGNLFIAVIYLFLITAFLSMWMSNTATAAMMLPLAMGILSQLDREKDHNTYVFVLLGIAYSASIGGMGTLVGSPPNAIVASNLNLTFSDWLWYGLPIMIILLPLMIGILYIIFKPKLHLNFEQTFENIEMNPMRILTFIIFPVIALTWIFSGKINPFISGLLGLQKNIASFDSIVALLAAIVICSTGVASWKQIQSNTDWGVLMLFGGGLTLSAVLKDSGASKILADSIVFMIDGQHFYLIGLLVAAFIIFLTEFTSNTASAALLVPIFISIAQSLGMPEIGLALIIGIGASCAFMLPVATPPNAIVFGSGQVKQSEMVKVGFLLNLVCVVVIATMGYMFWLK</sequence>
<dbReference type="EMBL" id="L42023">
    <property type="protein sequence ID" value="AAC22267.1"/>
    <property type="molecule type" value="Genomic_DNA"/>
</dbReference>
<dbReference type="PIR" id="I64080">
    <property type="entry name" value="I64080"/>
</dbReference>
<dbReference type="RefSeq" id="NP_438766.1">
    <property type="nucleotide sequence ID" value="NC_000907.1"/>
</dbReference>
<dbReference type="SMR" id="Q57486"/>
<dbReference type="STRING" id="71421.HI_0608"/>
<dbReference type="EnsemblBacteria" id="AAC22267">
    <property type="protein sequence ID" value="AAC22267"/>
    <property type="gene ID" value="HI_0608"/>
</dbReference>
<dbReference type="KEGG" id="hin:HI_0608"/>
<dbReference type="PATRIC" id="fig|71421.8.peg.632"/>
<dbReference type="eggNOG" id="COG0471">
    <property type="taxonomic scope" value="Bacteria"/>
</dbReference>
<dbReference type="HOGENOM" id="CLU_005170_0_2_6"/>
<dbReference type="OrthoDB" id="9766267at2"/>
<dbReference type="PhylomeDB" id="Q57486"/>
<dbReference type="BioCyc" id="HINF71421:G1GJ1-627-MONOMER"/>
<dbReference type="Proteomes" id="UP000000579">
    <property type="component" value="Chromosome"/>
</dbReference>
<dbReference type="GO" id="GO:0005886">
    <property type="term" value="C:plasma membrane"/>
    <property type="evidence" value="ECO:0000318"/>
    <property type="project" value="GO_Central"/>
</dbReference>
<dbReference type="GO" id="GO:0015141">
    <property type="term" value="F:succinate transmembrane transporter activity"/>
    <property type="evidence" value="ECO:0007669"/>
    <property type="project" value="UniProtKB-ARBA"/>
</dbReference>
<dbReference type="GO" id="GO:0022857">
    <property type="term" value="F:transmembrane transporter activity"/>
    <property type="evidence" value="ECO:0000318"/>
    <property type="project" value="GO_Central"/>
</dbReference>
<dbReference type="GO" id="GO:0055085">
    <property type="term" value="P:transmembrane transport"/>
    <property type="evidence" value="ECO:0000318"/>
    <property type="project" value="GO_Central"/>
</dbReference>
<dbReference type="CDD" id="cd01115">
    <property type="entry name" value="SLC13_permease"/>
    <property type="match status" value="1"/>
</dbReference>
<dbReference type="InterPro" id="IPR031312">
    <property type="entry name" value="Na/sul_symport_CS"/>
</dbReference>
<dbReference type="InterPro" id="IPR001898">
    <property type="entry name" value="SLC13A/DASS"/>
</dbReference>
<dbReference type="NCBIfam" id="TIGR00785">
    <property type="entry name" value="dass"/>
    <property type="match status" value="1"/>
</dbReference>
<dbReference type="PANTHER" id="PTHR10283">
    <property type="entry name" value="SOLUTE CARRIER FAMILY 13 MEMBER"/>
    <property type="match status" value="1"/>
</dbReference>
<dbReference type="PANTHER" id="PTHR10283:SF82">
    <property type="entry name" value="SOLUTE CARRIER FAMILY 13 MEMBER 2"/>
    <property type="match status" value="1"/>
</dbReference>
<dbReference type="Pfam" id="PF00939">
    <property type="entry name" value="Na_sulph_symp"/>
    <property type="match status" value="1"/>
</dbReference>
<dbReference type="PROSITE" id="PS01271">
    <property type="entry name" value="NA_SULFATE"/>
    <property type="match status" value="1"/>
</dbReference>
<keyword id="KW-1003">Cell membrane</keyword>
<keyword id="KW-0472">Membrane</keyword>
<keyword id="KW-1185">Reference proteome</keyword>
<keyword id="KW-0812">Transmembrane</keyword>
<keyword id="KW-1133">Transmembrane helix</keyword>
<keyword id="KW-0813">Transport</keyword>